<protein>
    <recommendedName>
        <fullName evidence="1">Glycine--tRNA ligase alpha subunit</fullName>
        <ecNumber evidence="1">6.1.1.14</ecNumber>
    </recommendedName>
    <alternativeName>
        <fullName evidence="1">Glycyl-tRNA synthetase alpha subunit</fullName>
        <shortName evidence="1">GlyRS</shortName>
    </alternativeName>
</protein>
<name>SYGA_THEYD</name>
<sequence length="285" mass="33274">MYFQEIIFTLNKYWAQKGCVILQPYDIEVGAGTFHTATFFRVLGPESWNTGYVQPCRRPTDGRYGENPNRLGQYYQYQVILKPSPENSQEVYIESLKALGIDPLKHDIRFVEDDWESPTLGAWGLGWEVWLDGMEITQFTYFQQVGGIDLKPVSVEITYGLERIAMYLQEVENVFDIKWNEKFTYGDIHKQPEIEFSYFNFDHSDPVIIKKHFDEYERESNRLRELGLVFPAYEFCLKCSHLFNLLDARGVLSVAERTNYIARVRTLAKACAESYLIKRYGVING</sequence>
<reference key="1">
    <citation type="submission" date="2008-08" db="EMBL/GenBank/DDBJ databases">
        <title>The complete genome sequence of Thermodesulfovibrio yellowstonii strain ATCC 51303 / DSM 11347 / YP87.</title>
        <authorList>
            <person name="Dodson R.J."/>
            <person name="Durkin A.S."/>
            <person name="Wu M."/>
            <person name="Eisen J."/>
            <person name="Sutton G."/>
        </authorList>
    </citation>
    <scope>NUCLEOTIDE SEQUENCE [LARGE SCALE GENOMIC DNA]</scope>
    <source>
        <strain>ATCC 51303 / DSM 11347 / YP87</strain>
    </source>
</reference>
<organism>
    <name type="scientific">Thermodesulfovibrio yellowstonii (strain ATCC 51303 / DSM 11347 / YP87)</name>
    <dbReference type="NCBI Taxonomy" id="289376"/>
    <lineage>
        <taxon>Bacteria</taxon>
        <taxon>Pseudomonadati</taxon>
        <taxon>Nitrospirota</taxon>
        <taxon>Thermodesulfovibrionia</taxon>
        <taxon>Thermodesulfovibrionales</taxon>
        <taxon>Thermodesulfovibrionaceae</taxon>
        <taxon>Thermodesulfovibrio</taxon>
    </lineage>
</organism>
<evidence type="ECO:0000255" key="1">
    <source>
        <dbReference type="HAMAP-Rule" id="MF_00254"/>
    </source>
</evidence>
<gene>
    <name evidence="1" type="primary">glyQ</name>
    <name type="ordered locus">THEYE_A2100</name>
</gene>
<feature type="chain" id="PRO_1000101243" description="Glycine--tRNA ligase alpha subunit">
    <location>
        <begin position="1"/>
        <end position="285"/>
    </location>
</feature>
<comment type="catalytic activity">
    <reaction evidence="1">
        <text>tRNA(Gly) + glycine + ATP = glycyl-tRNA(Gly) + AMP + diphosphate</text>
        <dbReference type="Rhea" id="RHEA:16013"/>
        <dbReference type="Rhea" id="RHEA-COMP:9664"/>
        <dbReference type="Rhea" id="RHEA-COMP:9683"/>
        <dbReference type="ChEBI" id="CHEBI:30616"/>
        <dbReference type="ChEBI" id="CHEBI:33019"/>
        <dbReference type="ChEBI" id="CHEBI:57305"/>
        <dbReference type="ChEBI" id="CHEBI:78442"/>
        <dbReference type="ChEBI" id="CHEBI:78522"/>
        <dbReference type="ChEBI" id="CHEBI:456215"/>
        <dbReference type="EC" id="6.1.1.14"/>
    </reaction>
</comment>
<comment type="subunit">
    <text evidence="1">Tetramer of two alpha and two beta subunits.</text>
</comment>
<comment type="subcellular location">
    <subcellularLocation>
        <location evidence="1">Cytoplasm</location>
    </subcellularLocation>
</comment>
<comment type="similarity">
    <text evidence="1">Belongs to the class-II aminoacyl-tRNA synthetase family.</text>
</comment>
<accession>B5YJ13</accession>
<keyword id="KW-0030">Aminoacyl-tRNA synthetase</keyword>
<keyword id="KW-0067">ATP-binding</keyword>
<keyword id="KW-0963">Cytoplasm</keyword>
<keyword id="KW-0436">Ligase</keyword>
<keyword id="KW-0547">Nucleotide-binding</keyword>
<keyword id="KW-0648">Protein biosynthesis</keyword>
<keyword id="KW-1185">Reference proteome</keyword>
<dbReference type="EC" id="6.1.1.14" evidence="1"/>
<dbReference type="EMBL" id="CP001147">
    <property type="protein sequence ID" value="ACI22102.1"/>
    <property type="molecule type" value="Genomic_DNA"/>
</dbReference>
<dbReference type="RefSeq" id="WP_012546794.1">
    <property type="nucleotide sequence ID" value="NC_011296.1"/>
</dbReference>
<dbReference type="RefSeq" id="YP_002249887.1">
    <property type="nucleotide sequence ID" value="NC_011296.1"/>
</dbReference>
<dbReference type="SMR" id="B5YJ13"/>
<dbReference type="FunCoup" id="B5YJ13">
    <property type="interactions" value="343"/>
</dbReference>
<dbReference type="STRING" id="289376.THEYE_A2100"/>
<dbReference type="EnsemblBacteria" id="ACI22102">
    <property type="protein sequence ID" value="ACI22102"/>
    <property type="gene ID" value="THEYE_A2100"/>
</dbReference>
<dbReference type="KEGG" id="tye:THEYE_A2100"/>
<dbReference type="PATRIC" id="fig|289376.4.peg.2048"/>
<dbReference type="eggNOG" id="COG0752">
    <property type="taxonomic scope" value="Bacteria"/>
</dbReference>
<dbReference type="HOGENOM" id="CLU_057066_1_0_0"/>
<dbReference type="InParanoid" id="B5YJ13"/>
<dbReference type="OrthoDB" id="9775440at2"/>
<dbReference type="Proteomes" id="UP000000718">
    <property type="component" value="Chromosome"/>
</dbReference>
<dbReference type="GO" id="GO:0005737">
    <property type="term" value="C:cytoplasm"/>
    <property type="evidence" value="ECO:0007669"/>
    <property type="project" value="UniProtKB-SubCell"/>
</dbReference>
<dbReference type="GO" id="GO:0005524">
    <property type="term" value="F:ATP binding"/>
    <property type="evidence" value="ECO:0007669"/>
    <property type="project" value="UniProtKB-UniRule"/>
</dbReference>
<dbReference type="GO" id="GO:0004820">
    <property type="term" value="F:glycine-tRNA ligase activity"/>
    <property type="evidence" value="ECO:0007669"/>
    <property type="project" value="UniProtKB-UniRule"/>
</dbReference>
<dbReference type="GO" id="GO:0006426">
    <property type="term" value="P:glycyl-tRNA aminoacylation"/>
    <property type="evidence" value="ECO:0007669"/>
    <property type="project" value="UniProtKB-UniRule"/>
</dbReference>
<dbReference type="CDD" id="cd00733">
    <property type="entry name" value="GlyRS_alpha_core"/>
    <property type="match status" value="1"/>
</dbReference>
<dbReference type="FunFam" id="3.30.930.10:FF:000006">
    <property type="entry name" value="Glycine--tRNA ligase alpha subunit"/>
    <property type="match status" value="1"/>
</dbReference>
<dbReference type="Gene3D" id="3.30.930.10">
    <property type="entry name" value="Bira Bifunctional Protein, Domain 2"/>
    <property type="match status" value="1"/>
</dbReference>
<dbReference type="Gene3D" id="1.20.58.180">
    <property type="entry name" value="Class II aaRS and biotin synthetases, domain 2"/>
    <property type="match status" value="1"/>
</dbReference>
<dbReference type="HAMAP" id="MF_00254">
    <property type="entry name" value="Gly_tRNA_synth_alpha"/>
    <property type="match status" value="1"/>
</dbReference>
<dbReference type="InterPro" id="IPR045864">
    <property type="entry name" value="aa-tRNA-synth_II/BPL/LPL"/>
</dbReference>
<dbReference type="InterPro" id="IPR006194">
    <property type="entry name" value="Gly-tRNA-synth_heterodimer"/>
</dbReference>
<dbReference type="InterPro" id="IPR002310">
    <property type="entry name" value="Gly-tRNA_ligase_asu"/>
</dbReference>
<dbReference type="NCBIfam" id="TIGR00388">
    <property type="entry name" value="glyQ"/>
    <property type="match status" value="1"/>
</dbReference>
<dbReference type="NCBIfam" id="NF006827">
    <property type="entry name" value="PRK09348.1"/>
    <property type="match status" value="1"/>
</dbReference>
<dbReference type="PANTHER" id="PTHR30075:SF2">
    <property type="entry name" value="GLYCINE--TRNA LIGASE, CHLOROPLASTIC_MITOCHONDRIAL 2"/>
    <property type="match status" value="1"/>
</dbReference>
<dbReference type="PANTHER" id="PTHR30075">
    <property type="entry name" value="GLYCYL-TRNA SYNTHETASE"/>
    <property type="match status" value="1"/>
</dbReference>
<dbReference type="Pfam" id="PF02091">
    <property type="entry name" value="tRNA-synt_2e"/>
    <property type="match status" value="1"/>
</dbReference>
<dbReference type="PRINTS" id="PR01044">
    <property type="entry name" value="TRNASYNTHGA"/>
</dbReference>
<dbReference type="SUPFAM" id="SSF55681">
    <property type="entry name" value="Class II aaRS and biotin synthetases"/>
    <property type="match status" value="1"/>
</dbReference>
<dbReference type="PROSITE" id="PS50861">
    <property type="entry name" value="AA_TRNA_LIGASE_II_GLYAB"/>
    <property type="match status" value="1"/>
</dbReference>
<proteinExistence type="inferred from homology"/>